<evidence type="ECO:0000255" key="1">
    <source>
        <dbReference type="HAMAP-Rule" id="MF_00333"/>
    </source>
</evidence>
<gene>
    <name evidence="1" type="primary">hemF</name>
    <name type="ordered locus">EcolC_1243</name>
</gene>
<feature type="chain" id="PRO_1000079257" description="Oxygen-dependent coproporphyrinogen-III oxidase">
    <location>
        <begin position="1"/>
        <end position="299"/>
    </location>
</feature>
<feature type="region of interest" description="Important for dimerization" evidence="1">
    <location>
        <begin position="240"/>
        <end position="275"/>
    </location>
</feature>
<feature type="active site" description="Proton donor" evidence="1">
    <location>
        <position position="106"/>
    </location>
</feature>
<feature type="binding site" evidence="1">
    <location>
        <position position="92"/>
    </location>
    <ligand>
        <name>substrate</name>
    </ligand>
</feature>
<feature type="binding site" evidence="1">
    <location>
        <position position="96"/>
    </location>
    <ligand>
        <name>Mn(2+)</name>
        <dbReference type="ChEBI" id="CHEBI:29035"/>
    </ligand>
</feature>
<feature type="binding site" evidence="1">
    <location>
        <position position="106"/>
    </location>
    <ligand>
        <name>Mn(2+)</name>
        <dbReference type="ChEBI" id="CHEBI:29035"/>
    </ligand>
</feature>
<feature type="binding site" evidence="1">
    <location>
        <begin position="108"/>
        <end position="110"/>
    </location>
    <ligand>
        <name>substrate</name>
    </ligand>
</feature>
<feature type="binding site" evidence="1">
    <location>
        <position position="145"/>
    </location>
    <ligand>
        <name>Mn(2+)</name>
        <dbReference type="ChEBI" id="CHEBI:29035"/>
    </ligand>
</feature>
<feature type="binding site" evidence="1">
    <location>
        <position position="175"/>
    </location>
    <ligand>
        <name>Mn(2+)</name>
        <dbReference type="ChEBI" id="CHEBI:29035"/>
    </ligand>
</feature>
<feature type="binding site" evidence="1">
    <location>
        <begin position="258"/>
        <end position="260"/>
    </location>
    <ligand>
        <name>substrate</name>
    </ligand>
</feature>
<feature type="site" description="Important for dimerization" evidence="1">
    <location>
        <position position="175"/>
    </location>
</feature>
<comment type="function">
    <text evidence="1">Involved in the heme biosynthesis. Catalyzes the aerobic oxidative decarboxylation of propionate groups of rings A and B of coproporphyrinogen-III to yield the vinyl groups in protoporphyrinogen-IX.</text>
</comment>
<comment type="catalytic activity">
    <reaction evidence="1">
        <text>coproporphyrinogen III + O2 + 2 H(+) = protoporphyrinogen IX + 2 CO2 + 2 H2O</text>
        <dbReference type="Rhea" id="RHEA:18257"/>
        <dbReference type="ChEBI" id="CHEBI:15377"/>
        <dbReference type="ChEBI" id="CHEBI:15378"/>
        <dbReference type="ChEBI" id="CHEBI:15379"/>
        <dbReference type="ChEBI" id="CHEBI:16526"/>
        <dbReference type="ChEBI" id="CHEBI:57307"/>
        <dbReference type="ChEBI" id="CHEBI:57309"/>
        <dbReference type="EC" id="1.3.3.3"/>
    </reaction>
</comment>
<comment type="cofactor">
    <cofactor evidence="1">
        <name>Mn(2+)</name>
        <dbReference type="ChEBI" id="CHEBI:29035"/>
    </cofactor>
</comment>
<comment type="pathway">
    <text evidence="1">Porphyrin-containing compound metabolism; protoporphyrin-IX biosynthesis; protoporphyrinogen-IX from coproporphyrinogen-III (O2 route): step 1/1.</text>
</comment>
<comment type="subunit">
    <text evidence="1">Homodimer.</text>
</comment>
<comment type="subcellular location">
    <subcellularLocation>
        <location evidence="1">Cytoplasm</location>
    </subcellularLocation>
</comment>
<comment type="similarity">
    <text evidence="1">Belongs to the aerobic coproporphyrinogen-III oxidase family.</text>
</comment>
<reference key="1">
    <citation type="submission" date="2008-02" db="EMBL/GenBank/DDBJ databases">
        <title>Complete sequence of Escherichia coli C str. ATCC 8739.</title>
        <authorList>
            <person name="Copeland A."/>
            <person name="Lucas S."/>
            <person name="Lapidus A."/>
            <person name="Glavina del Rio T."/>
            <person name="Dalin E."/>
            <person name="Tice H."/>
            <person name="Bruce D."/>
            <person name="Goodwin L."/>
            <person name="Pitluck S."/>
            <person name="Kiss H."/>
            <person name="Brettin T."/>
            <person name="Detter J.C."/>
            <person name="Han C."/>
            <person name="Kuske C.R."/>
            <person name="Schmutz J."/>
            <person name="Larimer F."/>
            <person name="Land M."/>
            <person name="Hauser L."/>
            <person name="Kyrpides N."/>
            <person name="Mikhailova N."/>
            <person name="Ingram L."/>
            <person name="Richardson P."/>
        </authorList>
    </citation>
    <scope>NUCLEOTIDE SEQUENCE [LARGE SCALE GENOMIC DNA]</scope>
    <source>
        <strain>ATCC 8739 / DSM 1576 / NBRC 3972 / NCIMB 8545 / WDCM 00012 / Crooks</strain>
    </source>
</reference>
<sequence>MKPDAHQVKQFLLNLQDTICQQLTAVDGAEFVEDSWQREAGGGGRSRVLRNGGVFEQAGVNFSHVHGEAMPASATAHRPELAGRSFEAMGVSLVVHPHNPYVPTSHANVRFFIAEKPGADPVWWFGGGFDLTPFYGFEEDAIHWHRTARDLCLPFGEDVYPRYKKWCDEYFYLKHRNEQRGIGGLFFDDLNTPDFDRCFAFMQAVGKGYTDAYLPIVERRKAMAYGERERNFQLYRRGRYVEFNLVWDRGTLFGLQTGGRTESILMSMPPLVRWEYDYQPKDGSPEAALSEFIKVRDWV</sequence>
<name>HEM6_ECOLC</name>
<proteinExistence type="inferred from homology"/>
<protein>
    <recommendedName>
        <fullName evidence="1">Oxygen-dependent coproporphyrinogen-III oxidase</fullName>
        <shortName evidence="1">CPO</shortName>
        <shortName evidence="1">Coprogen oxidase</shortName>
        <shortName evidence="1">Coproporphyrinogenase</shortName>
        <ecNumber evidence="1">1.3.3.3</ecNumber>
    </recommendedName>
</protein>
<accession>B1IWM6</accession>
<organism>
    <name type="scientific">Escherichia coli (strain ATCC 8739 / DSM 1576 / NBRC 3972 / NCIMB 8545 / WDCM 00012 / Crooks)</name>
    <dbReference type="NCBI Taxonomy" id="481805"/>
    <lineage>
        <taxon>Bacteria</taxon>
        <taxon>Pseudomonadati</taxon>
        <taxon>Pseudomonadota</taxon>
        <taxon>Gammaproteobacteria</taxon>
        <taxon>Enterobacterales</taxon>
        <taxon>Enterobacteriaceae</taxon>
        <taxon>Escherichia</taxon>
    </lineage>
</organism>
<keyword id="KW-0963">Cytoplasm</keyword>
<keyword id="KW-0350">Heme biosynthesis</keyword>
<keyword id="KW-0464">Manganese</keyword>
<keyword id="KW-0479">Metal-binding</keyword>
<keyword id="KW-0560">Oxidoreductase</keyword>
<keyword id="KW-0627">Porphyrin biosynthesis</keyword>
<dbReference type="EC" id="1.3.3.3" evidence="1"/>
<dbReference type="EMBL" id="CP000946">
    <property type="protein sequence ID" value="ACA76909.1"/>
    <property type="molecule type" value="Genomic_DNA"/>
</dbReference>
<dbReference type="RefSeq" id="WP_000801365.1">
    <property type="nucleotide sequence ID" value="NZ_MTFT01000002.1"/>
</dbReference>
<dbReference type="SMR" id="B1IWM6"/>
<dbReference type="KEGG" id="ecl:EcolC_1243"/>
<dbReference type="HOGENOM" id="CLU_026169_0_1_6"/>
<dbReference type="UniPathway" id="UPA00251">
    <property type="reaction ID" value="UER00322"/>
</dbReference>
<dbReference type="GO" id="GO:0005737">
    <property type="term" value="C:cytoplasm"/>
    <property type="evidence" value="ECO:0007669"/>
    <property type="project" value="UniProtKB-SubCell"/>
</dbReference>
<dbReference type="GO" id="GO:0004109">
    <property type="term" value="F:coproporphyrinogen oxidase activity"/>
    <property type="evidence" value="ECO:0007669"/>
    <property type="project" value="UniProtKB-UniRule"/>
</dbReference>
<dbReference type="GO" id="GO:0030145">
    <property type="term" value="F:manganese ion binding"/>
    <property type="evidence" value="ECO:0007669"/>
    <property type="project" value="UniProtKB-UniRule"/>
</dbReference>
<dbReference type="GO" id="GO:0042803">
    <property type="term" value="F:protein homodimerization activity"/>
    <property type="evidence" value="ECO:0000250"/>
    <property type="project" value="UniProtKB"/>
</dbReference>
<dbReference type="GO" id="GO:0006782">
    <property type="term" value="P:protoporphyrinogen IX biosynthetic process"/>
    <property type="evidence" value="ECO:0007669"/>
    <property type="project" value="UniProtKB-UniRule"/>
</dbReference>
<dbReference type="FunFam" id="3.40.1500.10:FF:000001">
    <property type="entry name" value="Oxygen-dependent coproporphyrinogen-III oxidase"/>
    <property type="match status" value="1"/>
</dbReference>
<dbReference type="Gene3D" id="3.40.1500.10">
    <property type="entry name" value="Coproporphyrinogen III oxidase, aerobic"/>
    <property type="match status" value="1"/>
</dbReference>
<dbReference type="HAMAP" id="MF_00333">
    <property type="entry name" value="Coprogen_oxidas"/>
    <property type="match status" value="1"/>
</dbReference>
<dbReference type="InterPro" id="IPR001260">
    <property type="entry name" value="Coprogen_oxidase_aer"/>
</dbReference>
<dbReference type="InterPro" id="IPR036406">
    <property type="entry name" value="Coprogen_oxidase_aer_sf"/>
</dbReference>
<dbReference type="InterPro" id="IPR018375">
    <property type="entry name" value="Coprogen_oxidase_CS"/>
</dbReference>
<dbReference type="NCBIfam" id="NF003727">
    <property type="entry name" value="PRK05330.1"/>
    <property type="match status" value="1"/>
</dbReference>
<dbReference type="PANTHER" id="PTHR10755">
    <property type="entry name" value="COPROPORPHYRINOGEN III OXIDASE, MITOCHONDRIAL"/>
    <property type="match status" value="1"/>
</dbReference>
<dbReference type="PANTHER" id="PTHR10755:SF0">
    <property type="entry name" value="OXYGEN-DEPENDENT COPROPORPHYRINOGEN-III OXIDASE, MITOCHONDRIAL"/>
    <property type="match status" value="1"/>
</dbReference>
<dbReference type="Pfam" id="PF01218">
    <property type="entry name" value="Coprogen_oxidas"/>
    <property type="match status" value="1"/>
</dbReference>
<dbReference type="PIRSF" id="PIRSF000166">
    <property type="entry name" value="Coproporphyri_ox"/>
    <property type="match status" value="1"/>
</dbReference>
<dbReference type="PRINTS" id="PR00073">
    <property type="entry name" value="COPRGNOXDASE"/>
</dbReference>
<dbReference type="SUPFAM" id="SSF102886">
    <property type="entry name" value="Coproporphyrinogen III oxidase"/>
    <property type="match status" value="1"/>
</dbReference>
<dbReference type="PROSITE" id="PS01021">
    <property type="entry name" value="COPROGEN_OXIDASE"/>
    <property type="match status" value="1"/>
</dbReference>